<organism>
    <name type="scientific">Mesorhizobium japonicum (strain LMG 29417 / CECT 9101 / MAFF 303099)</name>
    <name type="common">Mesorhizobium loti (strain MAFF 303099)</name>
    <dbReference type="NCBI Taxonomy" id="266835"/>
    <lineage>
        <taxon>Bacteria</taxon>
        <taxon>Pseudomonadati</taxon>
        <taxon>Pseudomonadota</taxon>
        <taxon>Alphaproteobacteria</taxon>
        <taxon>Hyphomicrobiales</taxon>
        <taxon>Phyllobacteriaceae</taxon>
        <taxon>Mesorhizobium</taxon>
    </lineage>
</organism>
<proteinExistence type="inferred from homology"/>
<accession>Q98CY3</accession>
<protein>
    <recommendedName>
        <fullName evidence="1">Urease subunit gamma</fullName>
        <ecNumber evidence="1">3.5.1.5</ecNumber>
    </recommendedName>
    <alternativeName>
        <fullName evidence="1">Urea amidohydrolase subunit gamma</fullName>
    </alternativeName>
</protein>
<reference key="1">
    <citation type="journal article" date="2000" name="DNA Res.">
        <title>Complete genome structure of the nitrogen-fixing symbiotic bacterium Mesorhizobium loti.</title>
        <authorList>
            <person name="Kaneko T."/>
            <person name="Nakamura Y."/>
            <person name="Sato S."/>
            <person name="Asamizu E."/>
            <person name="Kato T."/>
            <person name="Sasamoto S."/>
            <person name="Watanabe A."/>
            <person name="Idesawa K."/>
            <person name="Ishikawa A."/>
            <person name="Kawashima K."/>
            <person name="Kimura T."/>
            <person name="Kishida Y."/>
            <person name="Kiyokawa C."/>
            <person name="Kohara M."/>
            <person name="Matsumoto M."/>
            <person name="Matsuno A."/>
            <person name="Mochizuki Y."/>
            <person name="Nakayama S."/>
            <person name="Nakazaki N."/>
            <person name="Shimpo S."/>
            <person name="Sugimoto M."/>
            <person name="Takeuchi C."/>
            <person name="Yamada M."/>
            <person name="Tabata S."/>
        </authorList>
    </citation>
    <scope>NUCLEOTIDE SEQUENCE [LARGE SCALE GENOMIC DNA]</scope>
    <source>
        <strain>LMG 29417 / CECT 9101 / MAFF 303099</strain>
    </source>
</reference>
<feature type="chain" id="PRO_0000098032" description="Urease subunit gamma">
    <location>
        <begin position="1"/>
        <end position="100"/>
    </location>
</feature>
<name>URE3_RHILO</name>
<comment type="catalytic activity">
    <reaction evidence="1">
        <text>urea + 2 H2O + H(+) = hydrogencarbonate + 2 NH4(+)</text>
        <dbReference type="Rhea" id="RHEA:20557"/>
        <dbReference type="ChEBI" id="CHEBI:15377"/>
        <dbReference type="ChEBI" id="CHEBI:15378"/>
        <dbReference type="ChEBI" id="CHEBI:16199"/>
        <dbReference type="ChEBI" id="CHEBI:17544"/>
        <dbReference type="ChEBI" id="CHEBI:28938"/>
        <dbReference type="EC" id="3.5.1.5"/>
    </reaction>
</comment>
<comment type="pathway">
    <text evidence="1">Nitrogen metabolism; urea degradation; CO(2) and NH(3) from urea (urease route): step 1/1.</text>
</comment>
<comment type="subunit">
    <text evidence="1">Heterotrimer of UreA (gamma), UreB (beta) and UreC (alpha) subunits. Three heterotrimers associate to form the active enzyme.</text>
</comment>
<comment type="subcellular location">
    <subcellularLocation>
        <location evidence="1">Cytoplasm</location>
    </subcellularLocation>
</comment>
<comment type="similarity">
    <text evidence="1">Belongs to the urease gamma subunit family.</text>
</comment>
<keyword id="KW-0963">Cytoplasm</keyword>
<keyword id="KW-0378">Hydrolase</keyword>
<gene>
    <name evidence="1" type="primary">ureA</name>
    <name type="ordered locus">mll4948</name>
</gene>
<sequence length="100" mass="10945">MNLTPREKDKLLIAMAAIVARKRLERGVKLNHPEAIALITDFVVEGARDGRPVAELMEAGAHVVTRAQVMQGIAEMIHDVQVEATFPDGTKLVTVHAPIR</sequence>
<evidence type="ECO:0000255" key="1">
    <source>
        <dbReference type="HAMAP-Rule" id="MF_00739"/>
    </source>
</evidence>
<dbReference type="EC" id="3.5.1.5" evidence="1"/>
<dbReference type="EMBL" id="BA000012">
    <property type="protein sequence ID" value="BAB51488.1"/>
    <property type="molecule type" value="Genomic_DNA"/>
</dbReference>
<dbReference type="RefSeq" id="WP_010912829.1">
    <property type="nucleotide sequence ID" value="NC_002678.2"/>
</dbReference>
<dbReference type="SMR" id="Q98CY3"/>
<dbReference type="KEGG" id="mlo:mll4948"/>
<dbReference type="eggNOG" id="COG0831">
    <property type="taxonomic scope" value="Bacteria"/>
</dbReference>
<dbReference type="HOGENOM" id="CLU_145825_1_0_5"/>
<dbReference type="UniPathway" id="UPA00258">
    <property type="reaction ID" value="UER00370"/>
</dbReference>
<dbReference type="Proteomes" id="UP000000552">
    <property type="component" value="Chromosome"/>
</dbReference>
<dbReference type="GO" id="GO:0005737">
    <property type="term" value="C:cytoplasm"/>
    <property type="evidence" value="ECO:0007669"/>
    <property type="project" value="UniProtKB-SubCell"/>
</dbReference>
<dbReference type="GO" id="GO:0016151">
    <property type="term" value="F:nickel cation binding"/>
    <property type="evidence" value="ECO:0007669"/>
    <property type="project" value="InterPro"/>
</dbReference>
<dbReference type="GO" id="GO:0009039">
    <property type="term" value="F:urease activity"/>
    <property type="evidence" value="ECO:0007669"/>
    <property type="project" value="UniProtKB-UniRule"/>
</dbReference>
<dbReference type="GO" id="GO:0043419">
    <property type="term" value="P:urea catabolic process"/>
    <property type="evidence" value="ECO:0007669"/>
    <property type="project" value="UniProtKB-UniRule"/>
</dbReference>
<dbReference type="CDD" id="cd00390">
    <property type="entry name" value="Urease_gamma"/>
    <property type="match status" value="1"/>
</dbReference>
<dbReference type="Gene3D" id="3.30.280.10">
    <property type="entry name" value="Urease, gamma-like subunit"/>
    <property type="match status" value="1"/>
</dbReference>
<dbReference type="HAMAP" id="MF_00739">
    <property type="entry name" value="Urease_gamma"/>
    <property type="match status" value="1"/>
</dbReference>
<dbReference type="InterPro" id="IPR012010">
    <property type="entry name" value="Urease_gamma"/>
</dbReference>
<dbReference type="InterPro" id="IPR002026">
    <property type="entry name" value="Urease_gamma/gamma-beta_su"/>
</dbReference>
<dbReference type="InterPro" id="IPR036463">
    <property type="entry name" value="Urease_gamma_sf"/>
</dbReference>
<dbReference type="InterPro" id="IPR050069">
    <property type="entry name" value="Urease_subunit"/>
</dbReference>
<dbReference type="NCBIfam" id="NF009712">
    <property type="entry name" value="PRK13241.1"/>
    <property type="match status" value="1"/>
</dbReference>
<dbReference type="NCBIfam" id="TIGR00193">
    <property type="entry name" value="urease_gam"/>
    <property type="match status" value="1"/>
</dbReference>
<dbReference type="PANTHER" id="PTHR33569">
    <property type="entry name" value="UREASE"/>
    <property type="match status" value="1"/>
</dbReference>
<dbReference type="PANTHER" id="PTHR33569:SF1">
    <property type="entry name" value="UREASE"/>
    <property type="match status" value="1"/>
</dbReference>
<dbReference type="Pfam" id="PF00547">
    <property type="entry name" value="Urease_gamma"/>
    <property type="match status" value="1"/>
</dbReference>
<dbReference type="PIRSF" id="PIRSF001223">
    <property type="entry name" value="Urease_gamma"/>
    <property type="match status" value="1"/>
</dbReference>
<dbReference type="SUPFAM" id="SSF54111">
    <property type="entry name" value="Urease, gamma-subunit"/>
    <property type="match status" value="1"/>
</dbReference>